<sequence length="347" mass="37973">MATQAAPASGVRNGAGPEWGGFEENIQGGGSAVIDMENMDDTSGSSFEDMGELHQRLREEEVDADAAAAEEEDGEFLGMKGFKGQLSRQVADQMWQAGKRQASKAFSLYANIDILRPYFDVEPAQVRSRLLESMIPIKMVNFPQKVAGELYGPLMLVFTLVAILLHGMKTSDTIIREGTLMGTAIGTCFGYWLGVSSFIYFLAYLCNAQITMLQMLALLGYGLFGHCIVLFITYNIHLHALFYLFWLLLGGLSTLRMVAVLVSRTVGPTQRLLLCGTLAALHMLFLLYLHFAYHKVVEGILDTLEGPNIPPMQRVPRDIPAVLPAAKLPVAVVNATAKAIAVTLQSH</sequence>
<dbReference type="EMBL" id="AY387096">
    <property type="protein sequence ID" value="AAQ91066.1"/>
    <property type="molecule type" value="mRNA"/>
</dbReference>
<dbReference type="EMBL" id="BC087102">
    <property type="protein sequence ID" value="AAH87102.1"/>
    <property type="molecule type" value="mRNA"/>
</dbReference>
<dbReference type="RefSeq" id="NP_001007802.1">
    <property type="nucleotide sequence ID" value="NM_001007801.2"/>
</dbReference>
<dbReference type="BioGRID" id="256888">
    <property type="interactions" value="1"/>
</dbReference>
<dbReference type="FunCoup" id="Q6TUD4">
    <property type="interactions" value="1710"/>
</dbReference>
<dbReference type="STRING" id="10116.ENSRNOP00000025769"/>
<dbReference type="GlyCosmos" id="Q6TUD4">
    <property type="glycosylation" value="1 site, No reported glycans"/>
</dbReference>
<dbReference type="GlyGen" id="Q6TUD4">
    <property type="glycosylation" value="2 sites"/>
</dbReference>
<dbReference type="PhosphoSitePlus" id="Q6TUD4"/>
<dbReference type="jPOST" id="Q6TUD4"/>
<dbReference type="PaxDb" id="10116-ENSRNOP00000025769"/>
<dbReference type="Ensembl" id="ENSRNOT00000025769.7">
    <property type="protein sequence ID" value="ENSRNOP00000025769.3"/>
    <property type="gene ID" value="ENSRNOG00000018998.7"/>
</dbReference>
<dbReference type="GeneID" id="301245"/>
<dbReference type="KEGG" id="rno:301245"/>
<dbReference type="UCSC" id="RGD:1308185">
    <property type="organism name" value="rat"/>
</dbReference>
<dbReference type="AGR" id="RGD:1308185"/>
<dbReference type="CTD" id="25844"/>
<dbReference type="RGD" id="1308185">
    <property type="gene designation" value="Yipf3"/>
</dbReference>
<dbReference type="eggNOG" id="KOG3114">
    <property type="taxonomic scope" value="Eukaryota"/>
</dbReference>
<dbReference type="GeneTree" id="ENSGT00940000153766"/>
<dbReference type="HOGENOM" id="CLU_068070_0_0_1"/>
<dbReference type="InParanoid" id="Q6TUD4"/>
<dbReference type="OMA" id="HCIVLFV"/>
<dbReference type="OrthoDB" id="10256463at2759"/>
<dbReference type="PhylomeDB" id="Q6TUD4"/>
<dbReference type="TreeFam" id="TF314073"/>
<dbReference type="PRO" id="PR:Q6TUD4"/>
<dbReference type="Proteomes" id="UP000002494">
    <property type="component" value="Chromosome 9"/>
</dbReference>
<dbReference type="Bgee" id="ENSRNOG00000018998">
    <property type="expression patterns" value="Expressed in pancreas and 19 other cell types or tissues"/>
</dbReference>
<dbReference type="GO" id="GO:0005794">
    <property type="term" value="C:Golgi apparatus"/>
    <property type="evidence" value="ECO:0000318"/>
    <property type="project" value="GO_Central"/>
</dbReference>
<dbReference type="GO" id="GO:0005886">
    <property type="term" value="C:plasma membrane"/>
    <property type="evidence" value="ECO:0007669"/>
    <property type="project" value="UniProtKB-SubCell"/>
</dbReference>
<dbReference type="GO" id="GO:0030133">
    <property type="term" value="C:transport vesicle"/>
    <property type="evidence" value="ECO:0007669"/>
    <property type="project" value="Ensembl"/>
</dbReference>
<dbReference type="GO" id="GO:0030154">
    <property type="term" value="P:cell differentiation"/>
    <property type="evidence" value="ECO:0007669"/>
    <property type="project" value="UniProtKB-KW"/>
</dbReference>
<dbReference type="InterPro" id="IPR051521">
    <property type="entry name" value="tRNA_Mod/Golgi_Maint"/>
</dbReference>
<dbReference type="PANTHER" id="PTHR15627">
    <property type="entry name" value="NATURAL KILLER CELL-SPECIFIC ANTIGEN KLIP1"/>
    <property type="match status" value="1"/>
</dbReference>
<dbReference type="PANTHER" id="PTHR15627:SF14">
    <property type="entry name" value="PROTEIN YIPF3"/>
    <property type="match status" value="1"/>
</dbReference>
<organism>
    <name type="scientific">Rattus norvegicus</name>
    <name type="common">Rat</name>
    <dbReference type="NCBI Taxonomy" id="10116"/>
    <lineage>
        <taxon>Eukaryota</taxon>
        <taxon>Metazoa</taxon>
        <taxon>Chordata</taxon>
        <taxon>Craniata</taxon>
        <taxon>Vertebrata</taxon>
        <taxon>Euteleostomi</taxon>
        <taxon>Mammalia</taxon>
        <taxon>Eutheria</taxon>
        <taxon>Euarchontoglires</taxon>
        <taxon>Glires</taxon>
        <taxon>Rodentia</taxon>
        <taxon>Myomorpha</taxon>
        <taxon>Muroidea</taxon>
        <taxon>Muridae</taxon>
        <taxon>Murinae</taxon>
        <taxon>Rattus</taxon>
    </lineage>
</organism>
<protein>
    <recommendedName>
        <fullName>Protein YIPF3</fullName>
    </recommendedName>
    <alternativeName>
        <fullName>Liver regeneration-related protein LRRGT00110</fullName>
    </alternativeName>
    <alternativeName>
        <fullName>YIP1 family member 3</fullName>
    </alternativeName>
</protein>
<keyword id="KW-0007">Acetylation</keyword>
<keyword id="KW-1003">Cell membrane</keyword>
<keyword id="KW-0963">Cytoplasm</keyword>
<keyword id="KW-0221">Differentiation</keyword>
<keyword id="KW-0325">Glycoprotein</keyword>
<keyword id="KW-0333">Golgi apparatus</keyword>
<keyword id="KW-0472">Membrane</keyword>
<keyword id="KW-1185">Reference proteome</keyword>
<keyword id="KW-0812">Transmembrane</keyword>
<keyword id="KW-1133">Transmembrane helix</keyword>
<reference key="1">
    <citation type="submission" date="2003-09" db="EMBL/GenBank/DDBJ databases">
        <title>Liver regeneration after PH.</title>
        <authorList>
            <person name="Xu C.S."/>
            <person name="Chang C.F."/>
            <person name="Han H.P."/>
            <person name="Wang G.P."/>
            <person name="Chai L.Q."/>
            <person name="Yuan J.Y."/>
            <person name="Yang K.J."/>
            <person name="Zhao L.F."/>
            <person name="Ma H."/>
            <person name="Wang L."/>
            <person name="Wang S.F."/>
            <person name="Xing X.K."/>
            <person name="Shen G.M."/>
            <person name="Shi J.B."/>
            <person name="Rahman S."/>
            <person name="Wang Q.N."/>
            <person name="Zhang J.B."/>
        </authorList>
    </citation>
    <scope>NUCLEOTIDE SEQUENCE [LARGE SCALE MRNA]</scope>
    <source>
        <strain>Sprague-Dawley</strain>
        <tissue>Liver</tissue>
    </source>
</reference>
<reference key="2">
    <citation type="journal article" date="2004" name="Genome Res.">
        <title>The status, quality, and expansion of the NIH full-length cDNA project: the Mammalian Gene Collection (MGC).</title>
        <authorList>
            <consortium name="The MGC Project Team"/>
        </authorList>
    </citation>
    <scope>NUCLEOTIDE SEQUENCE [LARGE SCALE MRNA]</scope>
    <source>
        <tissue>Heart</tissue>
    </source>
</reference>
<name>YIPF3_RAT</name>
<evidence type="ECO:0000250" key="1"/>
<evidence type="ECO:0000250" key="2">
    <source>
        <dbReference type="UniProtKB" id="Q9GZM5"/>
    </source>
</evidence>
<evidence type="ECO:0000255" key="3"/>
<evidence type="ECO:0000256" key="4">
    <source>
        <dbReference type="SAM" id="MobiDB-lite"/>
    </source>
</evidence>
<evidence type="ECO:0000305" key="5"/>
<proteinExistence type="evidence at transcript level"/>
<accession>Q6TUD4</accession>
<gene>
    <name type="primary">Yipf3</name>
</gene>
<feature type="initiator methionine" description="Removed" evidence="2">
    <location>
        <position position="1"/>
    </location>
</feature>
<feature type="chain" id="PRO_0000244448" description="Protein YIPF3">
    <location>
        <begin position="2"/>
        <end position="347"/>
    </location>
</feature>
<feature type="topological domain" description="Cytoplasmic" evidence="2">
    <location>
        <begin position="2"/>
        <end position="145"/>
    </location>
</feature>
<feature type="transmembrane region" description="Helical" evidence="3">
    <location>
        <begin position="146"/>
        <end position="166"/>
    </location>
</feature>
<feature type="topological domain" description="Lumenal" evidence="5">
    <location>
        <begin position="167"/>
        <end position="184"/>
    </location>
</feature>
<feature type="transmembrane region" description="Helical" evidence="3">
    <location>
        <begin position="185"/>
        <end position="205"/>
    </location>
</feature>
<feature type="topological domain" description="Cytoplasmic" evidence="5">
    <location>
        <begin position="206"/>
        <end position="211"/>
    </location>
</feature>
<feature type="transmembrane region" description="Helical" evidence="3">
    <location>
        <begin position="212"/>
        <end position="234"/>
    </location>
</feature>
<feature type="topological domain" description="Lumenal" evidence="5">
    <location>
        <begin position="235"/>
        <end position="237"/>
    </location>
</feature>
<feature type="transmembrane region" description="Helical" evidence="3">
    <location>
        <begin position="238"/>
        <end position="260"/>
    </location>
</feature>
<feature type="topological domain" description="Cytoplasmic" evidence="5">
    <location>
        <begin position="261"/>
        <end position="271"/>
    </location>
</feature>
<feature type="transmembrane region" description="Helical" evidence="3">
    <location>
        <begin position="272"/>
        <end position="292"/>
    </location>
</feature>
<feature type="topological domain" description="Lumenal" evidence="2">
    <location>
        <begin position="293"/>
        <end position="347"/>
    </location>
</feature>
<feature type="region of interest" description="Disordered" evidence="4">
    <location>
        <begin position="1"/>
        <end position="28"/>
    </location>
</feature>
<feature type="modified residue" description="N-acetylalanine" evidence="2">
    <location>
        <position position="2"/>
    </location>
</feature>
<feature type="glycosylation site" description="N-linked (GlcNAc...) asparagine" evidence="3">
    <location>
        <position position="334"/>
    </location>
</feature>
<comment type="function">
    <text evidence="1">Involved in the maintenance of the Golgi structure. May play a role in hematopoiesis (By similarity).</text>
</comment>
<comment type="subunit">
    <text evidence="2">Interacts with YIPF4 and YIPF5.</text>
</comment>
<comment type="subcellular location">
    <subcellularLocation>
        <location evidence="1">Cell membrane</location>
        <topology>Multi-pass membrane protein</topology>
    </subcellularLocation>
    <subcellularLocation>
        <location evidence="1">Golgi apparatus</location>
        <location evidence="1">cis-Golgi network membrane</location>
        <topology>Multi-pass membrane protein</topology>
    </subcellularLocation>
    <subcellularLocation>
        <location evidence="1">Cytoplasm</location>
    </subcellularLocation>
</comment>
<comment type="similarity">
    <text evidence="5">Belongs to the YIP1 family.</text>
</comment>